<keyword id="KW-0025">Alternative splicing</keyword>
<keyword id="KW-0436">Ligase</keyword>
<keyword id="KW-1185">Reference proteome</keyword>
<comment type="function">
    <text evidence="1">Catalyzes the synthesis of indole-3-acetic acid (IAA)-amino acid conjugates, providing a mechanism for the plant to cope with the presence of excess auxin. Strongly reactive with Glu, Gln, Trp, Asp, Ala, Leu, Phe, Gly, Tyr, Met, Ile and Val. Appears to favor Glu over Asp while the other GH3 favor Asp over Glu. Little or no product formation with His, Ser, Thr, Arg, Lys, or Cys. Also active on pyruvic and butyric acid analogs of IAA, PAA and the synthetic auxin naphthaleneacetic acid (NAA). The two chlorinated synthetic auxin herbicides 2,4-D and 3,6-dichloro-o-anisic acid (dicamba) cannot be used as substrates.</text>
</comment>
<comment type="alternative products">
    <event type="alternative splicing"/>
    <isoform>
        <id>Q9FZ87-1</id>
        <name>1</name>
        <sequence type="displayed"/>
    </isoform>
    <isoform>
        <id>Q9FZ87-2</id>
        <name>2</name>
        <sequence type="described" ref="VSP_015094"/>
    </isoform>
</comment>
<comment type="induction">
    <text evidence="1">Not induced by auxin.</text>
</comment>
<comment type="miscellaneous">
    <molecule>Isoform 2</molecule>
    <text evidence="2">May be due to an intron retention.</text>
</comment>
<comment type="similarity">
    <text evidence="2">Belongs to the IAA-amido conjugating enzyme family.</text>
</comment>
<feature type="chain" id="PRO_0000203577" description="Indole-3-acetic acid-amido synthetase GH3.17">
    <location>
        <begin position="1"/>
        <end position="609"/>
    </location>
</feature>
<feature type="splice variant" id="VSP_015094" description="In isoform 2." evidence="2">
    <location>
        <begin position="1"/>
        <end position="143"/>
    </location>
</feature>
<proteinExistence type="evidence at protein level"/>
<evidence type="ECO:0000269" key="1">
    <source>
    </source>
</evidence>
<evidence type="ECO:0000305" key="2"/>
<gene>
    <name type="primary">GH3.17</name>
    <name type="ordered locus">At1g28130</name>
    <name type="ORF">F13K9.22</name>
    <name type="ORF">F3H9.21</name>
    <name type="ORF">F3H9_19</name>
</gene>
<reference key="1">
    <citation type="journal article" date="2000" name="Nature">
        <title>Sequence and analysis of chromosome 1 of the plant Arabidopsis thaliana.</title>
        <authorList>
            <person name="Theologis A."/>
            <person name="Ecker J.R."/>
            <person name="Palm C.J."/>
            <person name="Federspiel N.A."/>
            <person name="Kaul S."/>
            <person name="White O."/>
            <person name="Alonso J."/>
            <person name="Altafi H."/>
            <person name="Araujo R."/>
            <person name="Bowman C.L."/>
            <person name="Brooks S.Y."/>
            <person name="Buehler E."/>
            <person name="Chan A."/>
            <person name="Chao Q."/>
            <person name="Chen H."/>
            <person name="Cheuk R.F."/>
            <person name="Chin C.W."/>
            <person name="Chung M.K."/>
            <person name="Conn L."/>
            <person name="Conway A.B."/>
            <person name="Conway A.R."/>
            <person name="Creasy T.H."/>
            <person name="Dewar K."/>
            <person name="Dunn P."/>
            <person name="Etgu P."/>
            <person name="Feldblyum T.V."/>
            <person name="Feng J.-D."/>
            <person name="Fong B."/>
            <person name="Fujii C.Y."/>
            <person name="Gill J.E."/>
            <person name="Goldsmith A.D."/>
            <person name="Haas B."/>
            <person name="Hansen N.F."/>
            <person name="Hughes B."/>
            <person name="Huizar L."/>
            <person name="Hunter J.L."/>
            <person name="Jenkins J."/>
            <person name="Johnson-Hopson C."/>
            <person name="Khan S."/>
            <person name="Khaykin E."/>
            <person name="Kim C.J."/>
            <person name="Koo H.L."/>
            <person name="Kremenetskaia I."/>
            <person name="Kurtz D.B."/>
            <person name="Kwan A."/>
            <person name="Lam B."/>
            <person name="Langin-Hooper S."/>
            <person name="Lee A."/>
            <person name="Lee J.M."/>
            <person name="Lenz C.A."/>
            <person name="Li J.H."/>
            <person name="Li Y.-P."/>
            <person name="Lin X."/>
            <person name="Liu S.X."/>
            <person name="Liu Z.A."/>
            <person name="Luros J.S."/>
            <person name="Maiti R."/>
            <person name="Marziali A."/>
            <person name="Militscher J."/>
            <person name="Miranda M."/>
            <person name="Nguyen M."/>
            <person name="Nierman W.C."/>
            <person name="Osborne B.I."/>
            <person name="Pai G."/>
            <person name="Peterson J."/>
            <person name="Pham P.K."/>
            <person name="Rizzo M."/>
            <person name="Rooney T."/>
            <person name="Rowley D."/>
            <person name="Sakano H."/>
            <person name="Salzberg S.L."/>
            <person name="Schwartz J.R."/>
            <person name="Shinn P."/>
            <person name="Southwick A.M."/>
            <person name="Sun H."/>
            <person name="Tallon L.J."/>
            <person name="Tambunga G."/>
            <person name="Toriumi M.J."/>
            <person name="Town C.D."/>
            <person name="Utterback T."/>
            <person name="Van Aken S."/>
            <person name="Vaysberg M."/>
            <person name="Vysotskaia V.S."/>
            <person name="Walker M."/>
            <person name="Wu D."/>
            <person name="Yu G."/>
            <person name="Fraser C.M."/>
            <person name="Venter J.C."/>
            <person name="Davis R.W."/>
        </authorList>
    </citation>
    <scope>NUCLEOTIDE SEQUENCE [LARGE SCALE GENOMIC DNA]</scope>
    <source>
        <strain>cv. Columbia</strain>
    </source>
</reference>
<reference key="2">
    <citation type="journal article" date="2017" name="Plant J.">
        <title>Araport11: a complete reannotation of the Arabidopsis thaliana reference genome.</title>
        <authorList>
            <person name="Cheng C.Y."/>
            <person name="Krishnakumar V."/>
            <person name="Chan A.P."/>
            <person name="Thibaud-Nissen F."/>
            <person name="Schobel S."/>
            <person name="Town C.D."/>
        </authorList>
    </citation>
    <scope>GENOME REANNOTATION</scope>
    <source>
        <strain>cv. Columbia</strain>
    </source>
</reference>
<reference key="3">
    <citation type="journal article" date="2003" name="Science">
        <title>Empirical analysis of transcriptional activity in the Arabidopsis genome.</title>
        <authorList>
            <person name="Yamada K."/>
            <person name="Lim J."/>
            <person name="Dale J.M."/>
            <person name="Chen H."/>
            <person name="Shinn P."/>
            <person name="Palm C.J."/>
            <person name="Southwick A.M."/>
            <person name="Wu H.C."/>
            <person name="Kim C.J."/>
            <person name="Nguyen M."/>
            <person name="Pham P.K."/>
            <person name="Cheuk R.F."/>
            <person name="Karlin-Newmann G."/>
            <person name="Liu S.X."/>
            <person name="Lam B."/>
            <person name="Sakano H."/>
            <person name="Wu T."/>
            <person name="Yu G."/>
            <person name="Miranda M."/>
            <person name="Quach H.L."/>
            <person name="Tripp M."/>
            <person name="Chang C.H."/>
            <person name="Lee J.M."/>
            <person name="Toriumi M.J."/>
            <person name="Chan M.M."/>
            <person name="Tang C.C."/>
            <person name="Onodera C.S."/>
            <person name="Deng J.M."/>
            <person name="Akiyama K."/>
            <person name="Ansari Y."/>
            <person name="Arakawa T."/>
            <person name="Banh J."/>
            <person name="Banno F."/>
            <person name="Bowser L."/>
            <person name="Brooks S.Y."/>
            <person name="Carninci P."/>
            <person name="Chao Q."/>
            <person name="Choy N."/>
            <person name="Enju A."/>
            <person name="Goldsmith A.D."/>
            <person name="Gurjal M."/>
            <person name="Hansen N.F."/>
            <person name="Hayashizaki Y."/>
            <person name="Johnson-Hopson C."/>
            <person name="Hsuan V.W."/>
            <person name="Iida K."/>
            <person name="Karnes M."/>
            <person name="Khan S."/>
            <person name="Koesema E."/>
            <person name="Ishida J."/>
            <person name="Jiang P.X."/>
            <person name="Jones T."/>
            <person name="Kawai J."/>
            <person name="Kamiya A."/>
            <person name="Meyers C."/>
            <person name="Nakajima M."/>
            <person name="Narusaka M."/>
            <person name="Seki M."/>
            <person name="Sakurai T."/>
            <person name="Satou M."/>
            <person name="Tamse R."/>
            <person name="Vaysberg M."/>
            <person name="Wallender E.K."/>
            <person name="Wong C."/>
            <person name="Yamamura Y."/>
            <person name="Yuan S."/>
            <person name="Shinozaki K."/>
            <person name="Davis R.W."/>
            <person name="Theologis A."/>
            <person name="Ecker J.R."/>
        </authorList>
    </citation>
    <scope>NUCLEOTIDE SEQUENCE [LARGE SCALE MRNA] (ISOFORM 1)</scope>
    <source>
        <strain>cv. Columbia</strain>
    </source>
</reference>
<reference key="4">
    <citation type="journal article" date="2005" name="Plant Cell">
        <title>Characterization of an Arabidopsis enzyme family that conjugates amino acids to indole-3-acetic acid.</title>
        <authorList>
            <person name="Staswick P.E."/>
            <person name="Serban B."/>
            <person name="Rowe M."/>
            <person name="Tiryaki I."/>
            <person name="Maldonado M.T."/>
            <person name="Maldonado M.C."/>
            <person name="Suza W."/>
        </authorList>
    </citation>
    <scope>FUNCTION</scope>
    <scope>CHARACTERIZATION</scope>
    <scope>INDUCTION</scope>
</reference>
<reference key="5">
    <citation type="journal article" date="2002" name="Plant Mol. Biol.">
        <title>Auxin-responsive gene expression: genes, promoters and regulatory factors.</title>
        <authorList>
            <person name="Hagen G."/>
            <person name="Guilfoyle T.J."/>
        </authorList>
    </citation>
    <scope>NOMENCLATURE</scope>
</reference>
<protein>
    <recommendedName>
        <fullName>Indole-3-acetic acid-amido synthetase GH3.17</fullName>
        <ecNumber>6.3.2.-</ecNumber>
    </recommendedName>
    <alternativeName>
        <fullName>Auxin-responsive GH3-like protein 17</fullName>
        <shortName>AtGH3-17</shortName>
    </alternativeName>
</protein>
<sequence>MIPSYDPNDTEAGLKLLEDLTTNAEAIQQQVLHQILSQNSGTQYLRAFLDGEADKNQQSFKNKVPVVNYDDVKPFIQRIADGESSDIVSAQPITELLTSSGTSAGKPKLMPSTAEELERKTFFYSMLVPIMNKYVDGLDEGKGMYLLFIKPEIKTPSGLMARPVLTSYYKSQHFRNRPFNKYNVYTSPDQTILCQDSKQSMYCQLLCGLVQRSHVLRVGAVFASAFLRAVKFLEDHYKELCADIRTGTVTSWITDSSCRDSVLSILNGPNQELADEIESECAEKSWEGILRRIWPKAKYVEVIVTGSMAQYIPTLEFYSGGLPLVSTMYASSECYFGINLNPLCDPADVSYTLLPNMAYFEFLPVDDKSHEEIHFATHSNTDDDDDALKEDLIVNLVNVEVGQYYEIVITTFTGLYRYRVGDILKVTGFHNKAPQFRFVQRRNVVLSIDTDKTSEEDLLNAVTQAKLNHLQHPSSLLLTEYTSYADTSSIPGHYVLFWELKPRHSNDPPKLDDKTMEDCCSEVEDCLDYVYRRCRNRDKSIGPLEIRVVSLGTFDSLMDFCVSQGSSLNQYKTPRCVKSGGALEILDSRVIGRFFSKRVPQWEPLGLDS</sequence>
<dbReference type="EC" id="6.3.2.-"/>
<dbReference type="EMBL" id="AC021044">
    <property type="protein sequence ID" value="AAF98442.1"/>
    <property type="molecule type" value="Genomic_DNA"/>
</dbReference>
<dbReference type="EMBL" id="AC069471">
    <property type="protein sequence ID" value="AAG51481.1"/>
    <property type="molecule type" value="Genomic_DNA"/>
</dbReference>
<dbReference type="EMBL" id="CP002684">
    <property type="protein sequence ID" value="AEE30921.1"/>
    <property type="molecule type" value="Genomic_DNA"/>
</dbReference>
<dbReference type="EMBL" id="CP002684">
    <property type="protein sequence ID" value="AEE30922.1"/>
    <property type="molecule type" value="Genomic_DNA"/>
</dbReference>
<dbReference type="EMBL" id="AY052283">
    <property type="protein sequence ID" value="AAK96476.1"/>
    <property type="molecule type" value="mRNA"/>
</dbReference>
<dbReference type="EMBL" id="AY113067">
    <property type="protein sequence ID" value="AAM47375.1"/>
    <property type="molecule type" value="mRNA"/>
</dbReference>
<dbReference type="PIR" id="B86407">
    <property type="entry name" value="B86407"/>
</dbReference>
<dbReference type="RefSeq" id="NP_174134.1">
    <molecule id="Q9FZ87-1"/>
    <property type="nucleotide sequence ID" value="NM_102578.4"/>
</dbReference>
<dbReference type="RefSeq" id="NP_849718.1">
    <molecule id="Q9FZ87-2"/>
    <property type="nucleotide sequence ID" value="NM_179387.2"/>
</dbReference>
<dbReference type="SMR" id="Q9FZ87"/>
<dbReference type="BioGRID" id="24941">
    <property type="interactions" value="1"/>
</dbReference>
<dbReference type="FunCoup" id="Q9FZ87">
    <property type="interactions" value="1234"/>
</dbReference>
<dbReference type="STRING" id="3702.Q9FZ87"/>
<dbReference type="iPTMnet" id="Q9FZ87"/>
<dbReference type="PaxDb" id="3702-AT1G28130.1"/>
<dbReference type="ProteomicsDB" id="224790">
    <molecule id="Q9FZ87-1"/>
</dbReference>
<dbReference type="EnsemblPlants" id="AT1G28130.1">
    <molecule id="Q9FZ87-1"/>
    <property type="protein sequence ID" value="AT1G28130.1"/>
    <property type="gene ID" value="AT1G28130"/>
</dbReference>
<dbReference type="EnsemblPlants" id="AT1G28130.2">
    <molecule id="Q9FZ87-2"/>
    <property type="protein sequence ID" value="AT1G28130.2"/>
    <property type="gene ID" value="AT1G28130"/>
</dbReference>
<dbReference type="GeneID" id="839706"/>
<dbReference type="Gramene" id="AT1G28130.1">
    <molecule id="Q9FZ87-1"/>
    <property type="protein sequence ID" value="AT1G28130.1"/>
    <property type="gene ID" value="AT1G28130"/>
</dbReference>
<dbReference type="Gramene" id="AT1G28130.2">
    <molecule id="Q9FZ87-2"/>
    <property type="protein sequence ID" value="AT1G28130.2"/>
    <property type="gene ID" value="AT1G28130"/>
</dbReference>
<dbReference type="KEGG" id="ath:AT1G28130"/>
<dbReference type="Araport" id="AT1G28130"/>
<dbReference type="TAIR" id="AT1G28130">
    <property type="gene designation" value="GH3.17"/>
</dbReference>
<dbReference type="eggNOG" id="ENOG502QPMU">
    <property type="taxonomic scope" value="Eukaryota"/>
</dbReference>
<dbReference type="HOGENOM" id="CLU_016249_2_1_1"/>
<dbReference type="InParanoid" id="Q9FZ87"/>
<dbReference type="OMA" id="WITDPSC"/>
<dbReference type="OrthoDB" id="10004661at2759"/>
<dbReference type="PhylomeDB" id="Q9FZ87"/>
<dbReference type="BioCyc" id="ARA:AT1G28130-MONOMER"/>
<dbReference type="BioCyc" id="MetaCyc:AT1G28130-MONOMER"/>
<dbReference type="SABIO-RK" id="Q9FZ87"/>
<dbReference type="PRO" id="PR:Q9FZ87"/>
<dbReference type="Proteomes" id="UP000006548">
    <property type="component" value="Chromosome 1"/>
</dbReference>
<dbReference type="ExpressionAtlas" id="Q9FZ87">
    <property type="expression patterns" value="baseline and differential"/>
</dbReference>
<dbReference type="GO" id="GO:0005737">
    <property type="term" value="C:cytoplasm"/>
    <property type="evidence" value="ECO:0007005"/>
    <property type="project" value="TAIR"/>
</dbReference>
<dbReference type="GO" id="GO:0005634">
    <property type="term" value="C:nucleus"/>
    <property type="evidence" value="ECO:0007005"/>
    <property type="project" value="TAIR"/>
</dbReference>
<dbReference type="GO" id="GO:0010279">
    <property type="term" value="F:indole-3-acetic acid amido synthetase activity"/>
    <property type="evidence" value="ECO:0000314"/>
    <property type="project" value="TAIR"/>
</dbReference>
<dbReference type="GO" id="GO:0009733">
    <property type="term" value="P:response to auxin"/>
    <property type="evidence" value="ECO:0000315"/>
    <property type="project" value="TAIR"/>
</dbReference>
<dbReference type="InterPro" id="IPR004993">
    <property type="entry name" value="GH3"/>
</dbReference>
<dbReference type="InterPro" id="IPR055378">
    <property type="entry name" value="GH3_C"/>
</dbReference>
<dbReference type="InterPro" id="IPR055377">
    <property type="entry name" value="GH3_M"/>
</dbReference>
<dbReference type="PANTHER" id="PTHR31901">
    <property type="entry name" value="GH3 DOMAIN-CONTAINING PROTEIN"/>
    <property type="match status" value="1"/>
</dbReference>
<dbReference type="PANTHER" id="PTHR31901:SF33">
    <property type="entry name" value="INDOLE-3-ACETIC ACID-AMIDO SYNTHETASE GH3.17"/>
    <property type="match status" value="1"/>
</dbReference>
<dbReference type="Pfam" id="PF03321">
    <property type="entry name" value="GH3"/>
    <property type="match status" value="1"/>
</dbReference>
<dbReference type="Pfam" id="PF23572">
    <property type="entry name" value="GH3_C"/>
    <property type="match status" value="1"/>
</dbReference>
<dbReference type="Pfam" id="PF23571">
    <property type="entry name" value="GH3_M"/>
    <property type="match status" value="1"/>
</dbReference>
<organism>
    <name type="scientific">Arabidopsis thaliana</name>
    <name type="common">Mouse-ear cress</name>
    <dbReference type="NCBI Taxonomy" id="3702"/>
    <lineage>
        <taxon>Eukaryota</taxon>
        <taxon>Viridiplantae</taxon>
        <taxon>Streptophyta</taxon>
        <taxon>Embryophyta</taxon>
        <taxon>Tracheophyta</taxon>
        <taxon>Spermatophyta</taxon>
        <taxon>Magnoliopsida</taxon>
        <taxon>eudicotyledons</taxon>
        <taxon>Gunneridae</taxon>
        <taxon>Pentapetalae</taxon>
        <taxon>rosids</taxon>
        <taxon>malvids</taxon>
        <taxon>Brassicales</taxon>
        <taxon>Brassicaceae</taxon>
        <taxon>Camelineae</taxon>
        <taxon>Arabidopsis</taxon>
    </lineage>
</organism>
<accession>Q9FZ87</accession>
<name>GH317_ARATH</name>